<keyword id="KW-1185">Reference proteome</keyword>
<keyword id="KW-0687">Ribonucleoprotein</keyword>
<keyword id="KW-0689">Ribosomal protein</keyword>
<keyword id="KW-0694">RNA-binding</keyword>
<keyword id="KW-0699">rRNA-binding</keyword>
<name>RS17_ECO57</name>
<comment type="function">
    <text evidence="2">One of the primary rRNA binding proteins, it binds specifically to the 5'-end of 16S ribosomal RNA.</text>
</comment>
<comment type="subunit">
    <text evidence="2">Part of the 30S ribosomal subunit.</text>
</comment>
<comment type="similarity">
    <text evidence="2">Belongs to the universal ribosomal protein uS17 family.</text>
</comment>
<proteinExistence type="inferred from homology"/>
<feature type="initiator methionine" description="Removed" evidence="1">
    <location>
        <position position="1"/>
    </location>
</feature>
<feature type="chain" id="PRO_0000128457" description="Small ribosomal subunit protein uS17">
    <location>
        <begin position="2"/>
        <end position="84"/>
    </location>
</feature>
<evidence type="ECO:0000250" key="1"/>
<evidence type="ECO:0000255" key="2">
    <source>
        <dbReference type="HAMAP-Rule" id="MF_01345"/>
    </source>
</evidence>
<evidence type="ECO:0000305" key="3"/>
<gene>
    <name evidence="2" type="primary">rpsQ</name>
    <name type="ordered locus">Z4681</name>
    <name type="ordered locus">ECs4176</name>
</gene>
<dbReference type="EMBL" id="AE005174">
    <property type="protein sequence ID" value="AAG58432.1"/>
    <property type="molecule type" value="Genomic_DNA"/>
</dbReference>
<dbReference type="EMBL" id="BA000007">
    <property type="protein sequence ID" value="BAB37599.1"/>
    <property type="molecule type" value="Genomic_DNA"/>
</dbReference>
<dbReference type="PIR" id="D85996">
    <property type="entry name" value="D85996"/>
</dbReference>
<dbReference type="PIR" id="H91150">
    <property type="entry name" value="H91150"/>
</dbReference>
<dbReference type="RefSeq" id="NP_312203.1">
    <property type="nucleotide sequence ID" value="NC_002695.1"/>
</dbReference>
<dbReference type="RefSeq" id="WP_000130100.1">
    <property type="nucleotide sequence ID" value="NZ_VOAI01000041.1"/>
</dbReference>
<dbReference type="SMR" id="P0AG65"/>
<dbReference type="STRING" id="155864.Z4681"/>
<dbReference type="GeneID" id="915972"/>
<dbReference type="GeneID" id="93778676"/>
<dbReference type="KEGG" id="ece:Z4681"/>
<dbReference type="KEGG" id="ecs:ECs_4176"/>
<dbReference type="PATRIC" id="fig|386585.9.peg.4359"/>
<dbReference type="eggNOG" id="COG0186">
    <property type="taxonomic scope" value="Bacteria"/>
</dbReference>
<dbReference type="HOGENOM" id="CLU_073626_1_1_6"/>
<dbReference type="OMA" id="HPMYGKF"/>
<dbReference type="Proteomes" id="UP000000558">
    <property type="component" value="Chromosome"/>
</dbReference>
<dbReference type="Proteomes" id="UP000002519">
    <property type="component" value="Chromosome"/>
</dbReference>
<dbReference type="GO" id="GO:0022627">
    <property type="term" value="C:cytosolic small ribosomal subunit"/>
    <property type="evidence" value="ECO:0007669"/>
    <property type="project" value="TreeGrafter"/>
</dbReference>
<dbReference type="GO" id="GO:0019843">
    <property type="term" value="F:rRNA binding"/>
    <property type="evidence" value="ECO:0007669"/>
    <property type="project" value="UniProtKB-UniRule"/>
</dbReference>
<dbReference type="GO" id="GO:0003735">
    <property type="term" value="F:structural constituent of ribosome"/>
    <property type="evidence" value="ECO:0007669"/>
    <property type="project" value="InterPro"/>
</dbReference>
<dbReference type="GO" id="GO:0006412">
    <property type="term" value="P:translation"/>
    <property type="evidence" value="ECO:0007669"/>
    <property type="project" value="UniProtKB-UniRule"/>
</dbReference>
<dbReference type="CDD" id="cd00364">
    <property type="entry name" value="Ribosomal_uS17"/>
    <property type="match status" value="1"/>
</dbReference>
<dbReference type="FunFam" id="2.40.50.140:FF:000014">
    <property type="entry name" value="30S ribosomal protein S17"/>
    <property type="match status" value="1"/>
</dbReference>
<dbReference type="Gene3D" id="2.40.50.140">
    <property type="entry name" value="Nucleic acid-binding proteins"/>
    <property type="match status" value="1"/>
</dbReference>
<dbReference type="HAMAP" id="MF_01345_B">
    <property type="entry name" value="Ribosomal_uS17_B"/>
    <property type="match status" value="1"/>
</dbReference>
<dbReference type="InterPro" id="IPR012340">
    <property type="entry name" value="NA-bd_OB-fold"/>
</dbReference>
<dbReference type="InterPro" id="IPR000266">
    <property type="entry name" value="Ribosomal_uS17"/>
</dbReference>
<dbReference type="InterPro" id="IPR019984">
    <property type="entry name" value="Ribosomal_uS17_bact/chlr"/>
</dbReference>
<dbReference type="InterPro" id="IPR019979">
    <property type="entry name" value="Ribosomal_uS17_CS"/>
</dbReference>
<dbReference type="NCBIfam" id="NF004123">
    <property type="entry name" value="PRK05610.1"/>
    <property type="match status" value="1"/>
</dbReference>
<dbReference type="NCBIfam" id="TIGR03635">
    <property type="entry name" value="uS17_bact"/>
    <property type="match status" value="1"/>
</dbReference>
<dbReference type="PANTHER" id="PTHR10744">
    <property type="entry name" value="40S RIBOSOMAL PROTEIN S11 FAMILY MEMBER"/>
    <property type="match status" value="1"/>
</dbReference>
<dbReference type="PANTHER" id="PTHR10744:SF1">
    <property type="entry name" value="SMALL RIBOSOMAL SUBUNIT PROTEIN US17M"/>
    <property type="match status" value="1"/>
</dbReference>
<dbReference type="Pfam" id="PF00366">
    <property type="entry name" value="Ribosomal_S17"/>
    <property type="match status" value="1"/>
</dbReference>
<dbReference type="PRINTS" id="PR00973">
    <property type="entry name" value="RIBOSOMALS17"/>
</dbReference>
<dbReference type="SUPFAM" id="SSF50249">
    <property type="entry name" value="Nucleic acid-binding proteins"/>
    <property type="match status" value="1"/>
</dbReference>
<dbReference type="PROSITE" id="PS00056">
    <property type="entry name" value="RIBOSOMAL_S17"/>
    <property type="match status" value="1"/>
</dbReference>
<protein>
    <recommendedName>
        <fullName evidence="2">Small ribosomal subunit protein uS17</fullName>
    </recommendedName>
    <alternativeName>
        <fullName evidence="3">30S ribosomal protein S17</fullName>
    </alternativeName>
</protein>
<organism>
    <name type="scientific">Escherichia coli O157:H7</name>
    <dbReference type="NCBI Taxonomy" id="83334"/>
    <lineage>
        <taxon>Bacteria</taxon>
        <taxon>Pseudomonadati</taxon>
        <taxon>Pseudomonadota</taxon>
        <taxon>Gammaproteobacteria</taxon>
        <taxon>Enterobacterales</taxon>
        <taxon>Enterobacteriaceae</taxon>
        <taxon>Escherichia</taxon>
    </lineage>
</organism>
<reference key="1">
    <citation type="journal article" date="2001" name="Nature">
        <title>Genome sequence of enterohaemorrhagic Escherichia coli O157:H7.</title>
        <authorList>
            <person name="Perna N.T."/>
            <person name="Plunkett G. III"/>
            <person name="Burland V."/>
            <person name="Mau B."/>
            <person name="Glasner J.D."/>
            <person name="Rose D.J."/>
            <person name="Mayhew G.F."/>
            <person name="Evans P.S."/>
            <person name="Gregor J."/>
            <person name="Kirkpatrick H.A."/>
            <person name="Posfai G."/>
            <person name="Hackett J."/>
            <person name="Klink S."/>
            <person name="Boutin A."/>
            <person name="Shao Y."/>
            <person name="Miller L."/>
            <person name="Grotbeck E.J."/>
            <person name="Davis N.W."/>
            <person name="Lim A."/>
            <person name="Dimalanta E.T."/>
            <person name="Potamousis K."/>
            <person name="Apodaca J."/>
            <person name="Anantharaman T.S."/>
            <person name="Lin J."/>
            <person name="Yen G."/>
            <person name="Schwartz D.C."/>
            <person name="Welch R.A."/>
            <person name="Blattner F.R."/>
        </authorList>
    </citation>
    <scope>NUCLEOTIDE SEQUENCE [LARGE SCALE GENOMIC DNA]</scope>
    <source>
        <strain>O157:H7 / EDL933 / ATCC 700927 / EHEC</strain>
    </source>
</reference>
<reference key="2">
    <citation type="journal article" date="2001" name="DNA Res.">
        <title>Complete genome sequence of enterohemorrhagic Escherichia coli O157:H7 and genomic comparison with a laboratory strain K-12.</title>
        <authorList>
            <person name="Hayashi T."/>
            <person name="Makino K."/>
            <person name="Ohnishi M."/>
            <person name="Kurokawa K."/>
            <person name="Ishii K."/>
            <person name="Yokoyama K."/>
            <person name="Han C.-G."/>
            <person name="Ohtsubo E."/>
            <person name="Nakayama K."/>
            <person name="Murata T."/>
            <person name="Tanaka M."/>
            <person name="Tobe T."/>
            <person name="Iida T."/>
            <person name="Takami H."/>
            <person name="Honda T."/>
            <person name="Sasakawa C."/>
            <person name="Ogasawara N."/>
            <person name="Yasunaga T."/>
            <person name="Kuhara S."/>
            <person name="Shiba T."/>
            <person name="Hattori M."/>
            <person name="Shinagawa H."/>
        </authorList>
    </citation>
    <scope>NUCLEOTIDE SEQUENCE [LARGE SCALE GENOMIC DNA]</scope>
    <source>
        <strain>O157:H7 / Sakai / RIMD 0509952 / EHEC</strain>
    </source>
</reference>
<sequence length="84" mass="9704">MTDKIRTLQGRVVSDKMEKSIVVAIERFVKHPIYGKFIKRTTKLHVHDENNECGIGDVVEIRECRPLSKTKSWTLVRVVEKAVL</sequence>
<accession>P0AG65</accession>
<accession>P02373</accession>